<organism>
    <name type="scientific">Synechococcus sp. (strain CC9902)</name>
    <dbReference type="NCBI Taxonomy" id="316279"/>
    <lineage>
        <taxon>Bacteria</taxon>
        <taxon>Bacillati</taxon>
        <taxon>Cyanobacteriota</taxon>
        <taxon>Cyanophyceae</taxon>
        <taxon>Synechococcales</taxon>
        <taxon>Synechococcaceae</taxon>
        <taxon>Synechococcus</taxon>
    </lineage>
</organism>
<gene>
    <name evidence="1" type="primary">glmM</name>
    <name type="ordered locus">Syncc9902_2067</name>
</gene>
<name>GLMM_SYNS9</name>
<proteinExistence type="inferred from homology"/>
<sequence>MVQAAFSPVGPTLGDAIPGFGTDGIRGRVGSVVTPALCLQVGYWVGRVLAVEGPVLIGMDSRTSGSMVASALTAGLTAAGREVWNLGLCPTPAVPLLIRKFGAAGGLMVSASHNPPADNGIKVFGANGAKLAPERQARIEAGLRGEIDHSDHDHSLCAGLRQSSDLMADYRELLLSAVGSHRLDGVPIVLDLCWGSATACAADAFQALGADLTVLHGEPDGSRINVGCGSTALGPLQEAVKERGAVMGFAFDGDADRMLAVDGRGRIVDGDHVMFLWGSVLQEQQALPDQRLVATVMSNLGFQRAWEQRGGILERTPVGDQHVHAAMVASGAALGGEQSGHILAASHGLCGDGVLTALQLSTLCHAKGITLGDWLDRSFQPFPQKLVNVTVPSQARRKAWSSCEPLVAAIRSAEETMGSDGRVLVRASGTEPLVRVMVEAADASLVDHWADHLASVVDQSLNAA</sequence>
<dbReference type="EC" id="5.4.2.10" evidence="1"/>
<dbReference type="EMBL" id="CP000097">
    <property type="protein sequence ID" value="ABB27025.1"/>
    <property type="molecule type" value="Genomic_DNA"/>
</dbReference>
<dbReference type="RefSeq" id="WP_011360812.1">
    <property type="nucleotide sequence ID" value="NC_007513.1"/>
</dbReference>
<dbReference type="SMR" id="Q3AW32"/>
<dbReference type="STRING" id="316279.Syncc9902_2067"/>
<dbReference type="KEGG" id="sye:Syncc9902_2067"/>
<dbReference type="eggNOG" id="COG1109">
    <property type="taxonomic scope" value="Bacteria"/>
</dbReference>
<dbReference type="HOGENOM" id="CLU_016950_7_0_3"/>
<dbReference type="OrthoDB" id="9806956at2"/>
<dbReference type="Proteomes" id="UP000002712">
    <property type="component" value="Chromosome"/>
</dbReference>
<dbReference type="GO" id="GO:0005829">
    <property type="term" value="C:cytosol"/>
    <property type="evidence" value="ECO:0007669"/>
    <property type="project" value="TreeGrafter"/>
</dbReference>
<dbReference type="GO" id="GO:0000287">
    <property type="term" value="F:magnesium ion binding"/>
    <property type="evidence" value="ECO:0007669"/>
    <property type="project" value="UniProtKB-UniRule"/>
</dbReference>
<dbReference type="GO" id="GO:0008966">
    <property type="term" value="F:phosphoglucosamine mutase activity"/>
    <property type="evidence" value="ECO:0007669"/>
    <property type="project" value="UniProtKB-UniRule"/>
</dbReference>
<dbReference type="GO" id="GO:0004615">
    <property type="term" value="F:phosphomannomutase activity"/>
    <property type="evidence" value="ECO:0007669"/>
    <property type="project" value="TreeGrafter"/>
</dbReference>
<dbReference type="GO" id="GO:0005975">
    <property type="term" value="P:carbohydrate metabolic process"/>
    <property type="evidence" value="ECO:0007669"/>
    <property type="project" value="InterPro"/>
</dbReference>
<dbReference type="GO" id="GO:0009252">
    <property type="term" value="P:peptidoglycan biosynthetic process"/>
    <property type="evidence" value="ECO:0007669"/>
    <property type="project" value="TreeGrafter"/>
</dbReference>
<dbReference type="GO" id="GO:0006048">
    <property type="term" value="P:UDP-N-acetylglucosamine biosynthetic process"/>
    <property type="evidence" value="ECO:0007669"/>
    <property type="project" value="TreeGrafter"/>
</dbReference>
<dbReference type="CDD" id="cd05802">
    <property type="entry name" value="GlmM"/>
    <property type="match status" value="1"/>
</dbReference>
<dbReference type="FunFam" id="3.30.310.50:FF:000001">
    <property type="entry name" value="Phosphoglucosamine mutase"/>
    <property type="match status" value="1"/>
</dbReference>
<dbReference type="FunFam" id="3.40.120.10:FF:000001">
    <property type="entry name" value="Phosphoglucosamine mutase"/>
    <property type="match status" value="1"/>
</dbReference>
<dbReference type="FunFam" id="3.40.120.10:FF:000002">
    <property type="entry name" value="Phosphoglucosamine mutase"/>
    <property type="match status" value="1"/>
</dbReference>
<dbReference type="Gene3D" id="3.40.120.10">
    <property type="entry name" value="Alpha-D-Glucose-1,6-Bisphosphate, subunit A, domain 3"/>
    <property type="match status" value="3"/>
</dbReference>
<dbReference type="Gene3D" id="3.30.310.50">
    <property type="entry name" value="Alpha-D-phosphohexomutase, C-terminal domain"/>
    <property type="match status" value="1"/>
</dbReference>
<dbReference type="HAMAP" id="MF_01554_B">
    <property type="entry name" value="GlmM_B"/>
    <property type="match status" value="1"/>
</dbReference>
<dbReference type="InterPro" id="IPR005844">
    <property type="entry name" value="A-D-PHexomutase_a/b/a-I"/>
</dbReference>
<dbReference type="InterPro" id="IPR016055">
    <property type="entry name" value="A-D-PHexomutase_a/b/a-I/II/III"/>
</dbReference>
<dbReference type="InterPro" id="IPR005845">
    <property type="entry name" value="A-D-PHexomutase_a/b/a-II"/>
</dbReference>
<dbReference type="InterPro" id="IPR005846">
    <property type="entry name" value="A-D-PHexomutase_a/b/a-III"/>
</dbReference>
<dbReference type="InterPro" id="IPR005843">
    <property type="entry name" value="A-D-PHexomutase_C"/>
</dbReference>
<dbReference type="InterPro" id="IPR036900">
    <property type="entry name" value="A-D-PHexomutase_C_sf"/>
</dbReference>
<dbReference type="InterPro" id="IPR016066">
    <property type="entry name" value="A-D-PHexomutase_CS"/>
</dbReference>
<dbReference type="InterPro" id="IPR005841">
    <property type="entry name" value="Alpha-D-phosphohexomutase_SF"/>
</dbReference>
<dbReference type="InterPro" id="IPR006352">
    <property type="entry name" value="GlmM_bact"/>
</dbReference>
<dbReference type="InterPro" id="IPR050060">
    <property type="entry name" value="Phosphoglucosamine_mutase"/>
</dbReference>
<dbReference type="NCBIfam" id="TIGR01455">
    <property type="entry name" value="glmM"/>
    <property type="match status" value="1"/>
</dbReference>
<dbReference type="PANTHER" id="PTHR42946:SF1">
    <property type="entry name" value="PHOSPHOGLUCOMUTASE (ALPHA-D-GLUCOSE-1,6-BISPHOSPHATE-DEPENDENT)"/>
    <property type="match status" value="1"/>
</dbReference>
<dbReference type="PANTHER" id="PTHR42946">
    <property type="entry name" value="PHOSPHOHEXOSE MUTASE"/>
    <property type="match status" value="1"/>
</dbReference>
<dbReference type="Pfam" id="PF02878">
    <property type="entry name" value="PGM_PMM_I"/>
    <property type="match status" value="1"/>
</dbReference>
<dbReference type="Pfam" id="PF02879">
    <property type="entry name" value="PGM_PMM_II"/>
    <property type="match status" value="1"/>
</dbReference>
<dbReference type="Pfam" id="PF02880">
    <property type="entry name" value="PGM_PMM_III"/>
    <property type="match status" value="1"/>
</dbReference>
<dbReference type="Pfam" id="PF00408">
    <property type="entry name" value="PGM_PMM_IV"/>
    <property type="match status" value="1"/>
</dbReference>
<dbReference type="PRINTS" id="PR00509">
    <property type="entry name" value="PGMPMM"/>
</dbReference>
<dbReference type="SUPFAM" id="SSF55957">
    <property type="entry name" value="Phosphoglucomutase, C-terminal domain"/>
    <property type="match status" value="1"/>
</dbReference>
<dbReference type="SUPFAM" id="SSF53738">
    <property type="entry name" value="Phosphoglucomutase, first 3 domains"/>
    <property type="match status" value="3"/>
</dbReference>
<dbReference type="PROSITE" id="PS00710">
    <property type="entry name" value="PGM_PMM"/>
    <property type="match status" value="1"/>
</dbReference>
<feature type="chain" id="PRO_0000301395" description="Phosphoglucosamine mutase">
    <location>
        <begin position="1"/>
        <end position="464"/>
    </location>
</feature>
<feature type="active site" description="Phosphoserine intermediate" evidence="1">
    <location>
        <position position="112"/>
    </location>
</feature>
<feature type="binding site" description="via phosphate group" evidence="1">
    <location>
        <position position="112"/>
    </location>
    <ligand>
        <name>Mg(2+)</name>
        <dbReference type="ChEBI" id="CHEBI:18420"/>
    </ligand>
</feature>
<feature type="binding site" evidence="1">
    <location>
        <position position="252"/>
    </location>
    <ligand>
        <name>Mg(2+)</name>
        <dbReference type="ChEBI" id="CHEBI:18420"/>
    </ligand>
</feature>
<feature type="binding site" evidence="1">
    <location>
        <position position="254"/>
    </location>
    <ligand>
        <name>Mg(2+)</name>
        <dbReference type="ChEBI" id="CHEBI:18420"/>
    </ligand>
</feature>
<feature type="binding site" evidence="1">
    <location>
        <position position="256"/>
    </location>
    <ligand>
        <name>Mg(2+)</name>
        <dbReference type="ChEBI" id="CHEBI:18420"/>
    </ligand>
</feature>
<feature type="modified residue" description="Phosphoserine" evidence="1">
    <location>
        <position position="112"/>
    </location>
</feature>
<accession>Q3AW32</accession>
<comment type="function">
    <text evidence="1">Catalyzes the conversion of glucosamine-6-phosphate to glucosamine-1-phosphate.</text>
</comment>
<comment type="catalytic activity">
    <reaction evidence="1">
        <text>alpha-D-glucosamine 1-phosphate = D-glucosamine 6-phosphate</text>
        <dbReference type="Rhea" id="RHEA:23424"/>
        <dbReference type="ChEBI" id="CHEBI:58516"/>
        <dbReference type="ChEBI" id="CHEBI:58725"/>
        <dbReference type="EC" id="5.4.2.10"/>
    </reaction>
</comment>
<comment type="cofactor">
    <cofactor evidence="1">
        <name>Mg(2+)</name>
        <dbReference type="ChEBI" id="CHEBI:18420"/>
    </cofactor>
    <text evidence="1">Binds 1 Mg(2+) ion per subunit.</text>
</comment>
<comment type="PTM">
    <text evidence="1">Activated by phosphorylation.</text>
</comment>
<comment type="similarity">
    <text evidence="1">Belongs to the phosphohexose mutase family.</text>
</comment>
<reference key="1">
    <citation type="submission" date="2005-08" db="EMBL/GenBank/DDBJ databases">
        <title>Complete sequence of Synechococcus sp. CC9902.</title>
        <authorList>
            <person name="Copeland A."/>
            <person name="Lucas S."/>
            <person name="Lapidus A."/>
            <person name="Barry K."/>
            <person name="Detter J.C."/>
            <person name="Glavina T."/>
            <person name="Hammon N."/>
            <person name="Israni S."/>
            <person name="Pitluck S."/>
            <person name="Martinez M."/>
            <person name="Schmutz J."/>
            <person name="Larimer F."/>
            <person name="Land M."/>
            <person name="Kyrpides N."/>
            <person name="Ivanova N."/>
            <person name="Richardson P."/>
        </authorList>
    </citation>
    <scope>NUCLEOTIDE SEQUENCE [LARGE SCALE GENOMIC DNA]</scope>
    <source>
        <strain>CC9902</strain>
    </source>
</reference>
<protein>
    <recommendedName>
        <fullName evidence="1">Phosphoglucosamine mutase</fullName>
        <ecNumber evidence="1">5.4.2.10</ecNumber>
    </recommendedName>
</protein>
<keyword id="KW-0413">Isomerase</keyword>
<keyword id="KW-0460">Magnesium</keyword>
<keyword id="KW-0479">Metal-binding</keyword>
<keyword id="KW-0597">Phosphoprotein</keyword>
<keyword id="KW-1185">Reference proteome</keyword>
<evidence type="ECO:0000255" key="1">
    <source>
        <dbReference type="HAMAP-Rule" id="MF_01554"/>
    </source>
</evidence>